<name>Y2201_ARCFU</name>
<accession>O28082</accession>
<sequence length="184" mass="19846">MLLNEKDFKNEGVKIAALIMAESARTAPKSKGEDTIEIVYVDGEEMEKIAAKMEEMAEGGDKDFIRDAESVRKSQAILLIGAKGDRTVGVNCQACGFESCSEFKKADRKGENFVGPNCAFRMIDLGIALGSAVKVSAMLGIDTRIMYRIGIAAKKLGMIDADVVMGVPLSALGKSPYFDRAPKK</sequence>
<comment type="cofactor">
    <cofactor evidence="1">
        <name>[4Fe-4S] cluster</name>
        <dbReference type="ChEBI" id="CHEBI:49883"/>
    </cofactor>
    <text evidence="1">Binds 1 [4Fe-4S] cluster.</text>
</comment>
<gene>
    <name type="ordered locus">AF_2201</name>
</gene>
<reference key="1">
    <citation type="journal article" date="1997" name="Nature">
        <title>The complete genome sequence of the hyperthermophilic, sulphate-reducing archaeon Archaeoglobus fulgidus.</title>
        <authorList>
            <person name="Klenk H.-P."/>
            <person name="Clayton R.A."/>
            <person name="Tomb J.-F."/>
            <person name="White O."/>
            <person name="Nelson K.E."/>
            <person name="Ketchum K.A."/>
            <person name="Dodson R.J."/>
            <person name="Gwinn M.L."/>
            <person name="Hickey E.K."/>
            <person name="Peterson J.D."/>
            <person name="Richardson D.L."/>
            <person name="Kerlavage A.R."/>
            <person name="Graham D.E."/>
            <person name="Kyrpides N.C."/>
            <person name="Fleischmann R.D."/>
            <person name="Quackenbush J."/>
            <person name="Lee N.H."/>
            <person name="Sutton G.G."/>
            <person name="Gill S.R."/>
            <person name="Kirkness E.F."/>
            <person name="Dougherty B.A."/>
            <person name="McKenney K."/>
            <person name="Adams M.D."/>
            <person name="Loftus B.J."/>
            <person name="Peterson S.N."/>
            <person name="Reich C.I."/>
            <person name="McNeil L.K."/>
            <person name="Badger J.H."/>
            <person name="Glodek A."/>
            <person name="Zhou L."/>
            <person name="Overbeek R."/>
            <person name="Gocayne J.D."/>
            <person name="Weidman J.F."/>
            <person name="McDonald L.A."/>
            <person name="Utterback T.R."/>
            <person name="Cotton M.D."/>
            <person name="Spriggs T."/>
            <person name="Artiach P."/>
            <person name="Kaine B.P."/>
            <person name="Sykes S.M."/>
            <person name="Sadow P.W."/>
            <person name="D'Andrea K.P."/>
            <person name="Bowman C."/>
            <person name="Fujii C."/>
            <person name="Garland S.A."/>
            <person name="Mason T.M."/>
            <person name="Olsen G.J."/>
            <person name="Fraser C.M."/>
            <person name="Smith H.O."/>
            <person name="Woese C.R."/>
            <person name="Venter J.C."/>
        </authorList>
    </citation>
    <scope>NUCLEOTIDE SEQUENCE [LARGE SCALE GENOMIC DNA]</scope>
    <source>
        <strain>ATCC 49558 / DSM 4304 / JCM 9628 / NBRC 100126 / VC-16</strain>
    </source>
</reference>
<proteinExistence type="inferred from homology"/>
<feature type="chain" id="PRO_0000128119" description="Uncharacterized protein AF_2201">
    <location>
        <begin position="1"/>
        <end position="184"/>
    </location>
</feature>
<feature type="domain" description="4Fe-4S" evidence="1">
    <location>
        <begin position="72"/>
        <end position="135"/>
    </location>
</feature>
<feature type="binding site" evidence="1">
    <location>
        <position position="92"/>
    </location>
    <ligand>
        <name>[4Fe-4S] cluster</name>
        <dbReference type="ChEBI" id="CHEBI:49883"/>
    </ligand>
</feature>
<feature type="binding site" evidence="1">
    <location>
        <position position="95"/>
    </location>
    <ligand>
        <name>[4Fe-4S] cluster</name>
        <dbReference type="ChEBI" id="CHEBI:49883"/>
    </ligand>
</feature>
<feature type="binding site" evidence="1">
    <location>
        <position position="100"/>
    </location>
    <ligand>
        <name>[4Fe-4S] cluster</name>
        <dbReference type="ChEBI" id="CHEBI:49883"/>
    </ligand>
</feature>
<feature type="binding site" evidence="1">
    <location>
        <position position="118"/>
    </location>
    <ligand>
        <name>[4Fe-4S] cluster</name>
        <dbReference type="ChEBI" id="CHEBI:49883"/>
    </ligand>
</feature>
<protein>
    <recommendedName>
        <fullName>Uncharacterized protein AF_2201</fullName>
    </recommendedName>
</protein>
<evidence type="ECO:0000255" key="1">
    <source>
        <dbReference type="PROSITE-ProRule" id="PRU00989"/>
    </source>
</evidence>
<keyword id="KW-0004">4Fe-4S</keyword>
<keyword id="KW-0408">Iron</keyword>
<keyword id="KW-0411">Iron-sulfur</keyword>
<keyword id="KW-0479">Metal-binding</keyword>
<keyword id="KW-1185">Reference proteome</keyword>
<dbReference type="EMBL" id="AE000782">
    <property type="protein sequence ID" value="AAB89051.1"/>
    <property type="molecule type" value="Genomic_DNA"/>
</dbReference>
<dbReference type="PIR" id="A69525">
    <property type="entry name" value="A69525"/>
</dbReference>
<dbReference type="RefSeq" id="WP_010879690.1">
    <property type="nucleotide sequence ID" value="NC_000917.1"/>
</dbReference>
<dbReference type="STRING" id="224325.AF_2201"/>
<dbReference type="PaxDb" id="224325-AF_2201"/>
<dbReference type="EnsemblBacteria" id="AAB89051">
    <property type="protein sequence ID" value="AAB89051"/>
    <property type="gene ID" value="AF_2201"/>
</dbReference>
<dbReference type="KEGG" id="afu:AF_2201"/>
<dbReference type="eggNOG" id="arCOG04483">
    <property type="taxonomic scope" value="Archaea"/>
</dbReference>
<dbReference type="HOGENOM" id="CLU_111491_0_0_2"/>
<dbReference type="OrthoDB" id="146335at2157"/>
<dbReference type="PhylomeDB" id="O28082"/>
<dbReference type="Proteomes" id="UP000002199">
    <property type="component" value="Chromosome"/>
</dbReference>
<dbReference type="GO" id="GO:0051539">
    <property type="term" value="F:4 iron, 4 sulfur cluster binding"/>
    <property type="evidence" value="ECO:0007669"/>
    <property type="project" value="UniProtKB-KW"/>
</dbReference>
<dbReference type="GO" id="GO:0046872">
    <property type="term" value="F:metal ion binding"/>
    <property type="evidence" value="ECO:0007669"/>
    <property type="project" value="UniProtKB-KW"/>
</dbReference>
<dbReference type="GO" id="GO:0016491">
    <property type="term" value="F:oxidoreductase activity"/>
    <property type="evidence" value="ECO:0007669"/>
    <property type="project" value="InterPro"/>
</dbReference>
<dbReference type="Gene3D" id="3.40.109.10">
    <property type="entry name" value="NADH Oxidase"/>
    <property type="match status" value="1"/>
</dbReference>
<dbReference type="InterPro" id="IPR007202">
    <property type="entry name" value="4Fe-4S_dom"/>
</dbReference>
<dbReference type="InterPro" id="IPR019224">
    <property type="entry name" value="DUF2148"/>
</dbReference>
<dbReference type="InterPro" id="IPR000415">
    <property type="entry name" value="Nitroreductase-like"/>
</dbReference>
<dbReference type="PANTHER" id="PTHR40101:SF1">
    <property type="entry name" value="4FE-4S DOMAIN-CONTAINING PROTEIN"/>
    <property type="match status" value="1"/>
</dbReference>
<dbReference type="PANTHER" id="PTHR40101">
    <property type="entry name" value="CONSERVED PROTEIN"/>
    <property type="match status" value="1"/>
</dbReference>
<dbReference type="Pfam" id="PF09918">
    <property type="entry name" value="DUF2148"/>
    <property type="match status" value="1"/>
</dbReference>
<dbReference type="PROSITE" id="PS51656">
    <property type="entry name" value="4FE4S"/>
    <property type="match status" value="1"/>
</dbReference>
<organism>
    <name type="scientific">Archaeoglobus fulgidus (strain ATCC 49558 / DSM 4304 / JCM 9628 / NBRC 100126 / VC-16)</name>
    <dbReference type="NCBI Taxonomy" id="224325"/>
    <lineage>
        <taxon>Archaea</taxon>
        <taxon>Methanobacteriati</taxon>
        <taxon>Methanobacteriota</taxon>
        <taxon>Archaeoglobi</taxon>
        <taxon>Archaeoglobales</taxon>
        <taxon>Archaeoglobaceae</taxon>
        <taxon>Archaeoglobus</taxon>
    </lineage>
</organism>